<reference key="1">
    <citation type="journal article" date="2000" name="Nature">
        <title>Sequence and analysis of chromosome 3 of the plant Arabidopsis thaliana.</title>
        <authorList>
            <person name="Salanoubat M."/>
            <person name="Lemcke K."/>
            <person name="Rieger M."/>
            <person name="Ansorge W."/>
            <person name="Unseld M."/>
            <person name="Fartmann B."/>
            <person name="Valle G."/>
            <person name="Bloecker H."/>
            <person name="Perez-Alonso M."/>
            <person name="Obermaier B."/>
            <person name="Delseny M."/>
            <person name="Boutry M."/>
            <person name="Grivell L.A."/>
            <person name="Mache R."/>
            <person name="Puigdomenech P."/>
            <person name="De Simone V."/>
            <person name="Choisne N."/>
            <person name="Artiguenave F."/>
            <person name="Robert C."/>
            <person name="Brottier P."/>
            <person name="Wincker P."/>
            <person name="Cattolico L."/>
            <person name="Weissenbach J."/>
            <person name="Saurin W."/>
            <person name="Quetier F."/>
            <person name="Schaefer M."/>
            <person name="Mueller-Auer S."/>
            <person name="Gabel C."/>
            <person name="Fuchs M."/>
            <person name="Benes V."/>
            <person name="Wurmbach E."/>
            <person name="Drzonek H."/>
            <person name="Erfle H."/>
            <person name="Jordan N."/>
            <person name="Bangert S."/>
            <person name="Wiedelmann R."/>
            <person name="Kranz H."/>
            <person name="Voss H."/>
            <person name="Holland R."/>
            <person name="Brandt P."/>
            <person name="Nyakatura G."/>
            <person name="Vezzi A."/>
            <person name="D'Angelo M."/>
            <person name="Pallavicini A."/>
            <person name="Toppo S."/>
            <person name="Simionati B."/>
            <person name="Conrad A."/>
            <person name="Hornischer K."/>
            <person name="Kauer G."/>
            <person name="Loehnert T.-H."/>
            <person name="Nordsiek G."/>
            <person name="Reichelt J."/>
            <person name="Scharfe M."/>
            <person name="Schoen O."/>
            <person name="Bargues M."/>
            <person name="Terol J."/>
            <person name="Climent J."/>
            <person name="Navarro P."/>
            <person name="Collado C."/>
            <person name="Perez-Perez A."/>
            <person name="Ottenwaelder B."/>
            <person name="Duchemin D."/>
            <person name="Cooke R."/>
            <person name="Laudie M."/>
            <person name="Berger-Llauro C."/>
            <person name="Purnelle B."/>
            <person name="Masuy D."/>
            <person name="de Haan M."/>
            <person name="Maarse A.C."/>
            <person name="Alcaraz J.-P."/>
            <person name="Cottet A."/>
            <person name="Casacuberta E."/>
            <person name="Monfort A."/>
            <person name="Argiriou A."/>
            <person name="Flores M."/>
            <person name="Liguori R."/>
            <person name="Vitale D."/>
            <person name="Mannhaupt G."/>
            <person name="Haase D."/>
            <person name="Schoof H."/>
            <person name="Rudd S."/>
            <person name="Zaccaria P."/>
            <person name="Mewes H.-W."/>
            <person name="Mayer K.F.X."/>
            <person name="Kaul S."/>
            <person name="Town C.D."/>
            <person name="Koo H.L."/>
            <person name="Tallon L.J."/>
            <person name="Jenkins J."/>
            <person name="Rooney T."/>
            <person name="Rizzo M."/>
            <person name="Walts A."/>
            <person name="Utterback T."/>
            <person name="Fujii C.Y."/>
            <person name="Shea T.P."/>
            <person name="Creasy T.H."/>
            <person name="Haas B."/>
            <person name="Maiti R."/>
            <person name="Wu D."/>
            <person name="Peterson J."/>
            <person name="Van Aken S."/>
            <person name="Pai G."/>
            <person name="Militscher J."/>
            <person name="Sellers P."/>
            <person name="Gill J.E."/>
            <person name="Feldblyum T.V."/>
            <person name="Preuss D."/>
            <person name="Lin X."/>
            <person name="Nierman W.C."/>
            <person name="Salzberg S.L."/>
            <person name="White O."/>
            <person name="Venter J.C."/>
            <person name="Fraser C.M."/>
            <person name="Kaneko T."/>
            <person name="Nakamura Y."/>
            <person name="Sato S."/>
            <person name="Kato T."/>
            <person name="Asamizu E."/>
            <person name="Sasamoto S."/>
            <person name="Kimura T."/>
            <person name="Idesawa K."/>
            <person name="Kawashima K."/>
            <person name="Kishida Y."/>
            <person name="Kiyokawa C."/>
            <person name="Kohara M."/>
            <person name="Matsumoto M."/>
            <person name="Matsuno A."/>
            <person name="Muraki A."/>
            <person name="Nakayama S."/>
            <person name="Nakazaki N."/>
            <person name="Shinpo S."/>
            <person name="Takeuchi C."/>
            <person name="Wada T."/>
            <person name="Watanabe A."/>
            <person name="Yamada M."/>
            <person name="Yasuda M."/>
            <person name="Tabata S."/>
        </authorList>
    </citation>
    <scope>NUCLEOTIDE SEQUENCE [LARGE SCALE GENOMIC DNA]</scope>
    <source>
        <strain>cv. Columbia</strain>
    </source>
</reference>
<reference key="2">
    <citation type="journal article" date="2017" name="Plant J.">
        <title>Araport11: a complete reannotation of the Arabidopsis thaliana reference genome.</title>
        <authorList>
            <person name="Cheng C.Y."/>
            <person name="Krishnakumar V."/>
            <person name="Chan A.P."/>
            <person name="Thibaud-Nissen F."/>
            <person name="Schobel S."/>
            <person name="Town C.D."/>
        </authorList>
    </citation>
    <scope>GENOME REANNOTATION</scope>
    <source>
        <strain>cv. Columbia</strain>
    </source>
</reference>
<reference key="3">
    <citation type="journal article" date="2003" name="Science">
        <title>Empirical analysis of transcriptional activity in the Arabidopsis genome.</title>
        <authorList>
            <person name="Yamada K."/>
            <person name="Lim J."/>
            <person name="Dale J.M."/>
            <person name="Chen H."/>
            <person name="Shinn P."/>
            <person name="Palm C.J."/>
            <person name="Southwick A.M."/>
            <person name="Wu H.C."/>
            <person name="Kim C.J."/>
            <person name="Nguyen M."/>
            <person name="Pham P.K."/>
            <person name="Cheuk R.F."/>
            <person name="Karlin-Newmann G."/>
            <person name="Liu S.X."/>
            <person name="Lam B."/>
            <person name="Sakano H."/>
            <person name="Wu T."/>
            <person name="Yu G."/>
            <person name="Miranda M."/>
            <person name="Quach H.L."/>
            <person name="Tripp M."/>
            <person name="Chang C.H."/>
            <person name="Lee J.M."/>
            <person name="Toriumi M.J."/>
            <person name="Chan M.M."/>
            <person name="Tang C.C."/>
            <person name="Onodera C.S."/>
            <person name="Deng J.M."/>
            <person name="Akiyama K."/>
            <person name="Ansari Y."/>
            <person name="Arakawa T."/>
            <person name="Banh J."/>
            <person name="Banno F."/>
            <person name="Bowser L."/>
            <person name="Brooks S.Y."/>
            <person name="Carninci P."/>
            <person name="Chao Q."/>
            <person name="Choy N."/>
            <person name="Enju A."/>
            <person name="Goldsmith A.D."/>
            <person name="Gurjal M."/>
            <person name="Hansen N.F."/>
            <person name="Hayashizaki Y."/>
            <person name="Johnson-Hopson C."/>
            <person name="Hsuan V.W."/>
            <person name="Iida K."/>
            <person name="Karnes M."/>
            <person name="Khan S."/>
            <person name="Koesema E."/>
            <person name="Ishida J."/>
            <person name="Jiang P.X."/>
            <person name="Jones T."/>
            <person name="Kawai J."/>
            <person name="Kamiya A."/>
            <person name="Meyers C."/>
            <person name="Nakajima M."/>
            <person name="Narusaka M."/>
            <person name="Seki M."/>
            <person name="Sakurai T."/>
            <person name="Satou M."/>
            <person name="Tamse R."/>
            <person name="Vaysberg M."/>
            <person name="Wallender E.K."/>
            <person name="Wong C."/>
            <person name="Yamamura Y."/>
            <person name="Yuan S."/>
            <person name="Shinozaki K."/>
            <person name="Davis R.W."/>
            <person name="Theologis A."/>
            <person name="Ecker J.R."/>
        </authorList>
    </citation>
    <scope>NUCLEOTIDE SEQUENCE [LARGE SCALE MRNA]</scope>
    <source>
        <strain>cv. Columbia</strain>
    </source>
</reference>
<reference key="4">
    <citation type="journal article" date="2009" name="Plant J.">
        <title>The chloroplastic lipocalin AtCHL prevents lipid peroxidation and protects Arabidopsis against oxidative stress.</title>
        <authorList>
            <person name="Levesque-Tremblay G."/>
            <person name="Havaux M."/>
            <person name="Ouellet F."/>
        </authorList>
    </citation>
    <scope>FUNCTION</scope>
    <scope>DISRUPTION PHENOTYPE</scope>
    <scope>SUBCELLULAR LOCATION</scope>
    <scope>INDUCTION BY DROUGHT; HIGH LIGHT; PARAQUAT AND ABSCISIC ACID TREATMENTS</scope>
    <source>
        <strain>cv. Columbia</strain>
    </source>
</reference>
<reference key="5">
    <citation type="journal article" date="2014" name="Plant Cell Environ.">
        <title>Arabidopsis lipocalins AtCHL and AtTIL have distinct but overlapping functions essential for lipid protection and seed longevity.</title>
        <authorList>
            <person name="Boca S."/>
            <person name="Koestler F."/>
            <person name="Ksas B."/>
            <person name="Chevalier A."/>
            <person name="Leymarie J."/>
            <person name="Fekete A."/>
            <person name="Mueller M.J."/>
            <person name="Havaux M."/>
        </authorList>
    </citation>
    <scope>FUNCTION</scope>
    <scope>DISRUPTION PHENOTYPE</scope>
    <scope>TISSUE SPECIFICITY</scope>
    <source>
        <strain>cv. Columbia</strain>
    </source>
</reference>
<organism evidence="10">
    <name type="scientific">Arabidopsis thaliana</name>
    <name type="common">Mouse-ear cress</name>
    <dbReference type="NCBI Taxonomy" id="3702"/>
    <lineage>
        <taxon>Eukaryota</taxon>
        <taxon>Viridiplantae</taxon>
        <taxon>Streptophyta</taxon>
        <taxon>Embryophyta</taxon>
        <taxon>Tracheophyta</taxon>
        <taxon>Spermatophyta</taxon>
        <taxon>Magnoliopsida</taxon>
        <taxon>eudicotyledons</taxon>
        <taxon>Gunneridae</taxon>
        <taxon>Pentapetalae</taxon>
        <taxon>rosids</taxon>
        <taxon>malvids</taxon>
        <taxon>Brassicales</taxon>
        <taxon>Brassicaceae</taxon>
        <taxon>Camelineae</taxon>
        <taxon>Arabidopsis</taxon>
    </lineage>
</organism>
<evidence type="ECO:0000250" key="1">
    <source>
        <dbReference type="UniProtKB" id="P05090"/>
    </source>
</evidence>
<evidence type="ECO:0000255" key="2"/>
<evidence type="ECO:0000256" key="3">
    <source>
        <dbReference type="SAM" id="MobiDB-lite"/>
    </source>
</evidence>
<evidence type="ECO:0000269" key="4">
    <source>
    </source>
</evidence>
<evidence type="ECO:0000269" key="5">
    <source>
    </source>
</evidence>
<evidence type="ECO:0000303" key="6">
    <source>
    </source>
</evidence>
<evidence type="ECO:0000305" key="7"/>
<evidence type="ECO:0000312" key="8">
    <source>
        <dbReference type="EMBL" id="AEE78341.1"/>
    </source>
</evidence>
<evidence type="ECO:0000312" key="9">
    <source>
        <dbReference type="EMBL" id="CAB41869.1"/>
    </source>
</evidence>
<evidence type="ECO:0000312" key="10">
    <source>
        <dbReference type="Proteomes" id="UP000006548"/>
    </source>
</evidence>
<sequence>MILLSSSISLSRPVSSQSFSPPAATSTRRSHSSVTVKCCCSSRRLLKNPELKCSLENLFEIQALRKCFVSGFAAILLLSQAGQGIALDLSSGYQNICQLGSAAAVGENKLTLPSDGDSESMMMMMMRGMTAKNFDPVRYSGRWFEVASLKRGFAGQGQEDCHCTQGVYTFDMKESAIRVDTFCVHGSPDGYITGIRGKVQCVGAEDLEKSETDLEKQEMIKEKCFLRFPTIPFIPKLPYDVIATDYDNYALVSGAKDKGFVQVYSRTPNPGPEFIAKYKNYLAQFGYDPEKIKDTPQDCEVTDAELAAMMSMPGMEQTLTNQFPDLGLRKSVQFDPFTSVFETLKKLVPLYFK</sequence>
<proteinExistence type="evidence at protein level"/>
<name>CHL_ARATH</name>
<protein>
    <recommendedName>
        <fullName evidence="6">Chloroplastic lipocalin</fullName>
        <shortName evidence="6">AtCHL</shortName>
    </recommendedName>
</protein>
<comment type="function">
    <text evidence="4 5">Lipocalin that prevents thylakoidal membrane lipids peroxidation and confers protection against oxidative stress, especially mediated by singlet oxygen in response to high light and other stress (e.g. heat shocks) (PubMed:19674405, PubMed:23837879). Required for seed longevity by ensuring polyunsaturated lipids integrity (PubMed:23837879).</text>
</comment>
<comment type="subcellular location">
    <subcellularLocation>
        <location evidence="4">Plastid</location>
        <location evidence="4">Chloroplast thylakoid lumen</location>
    </subcellularLocation>
</comment>
<comment type="tissue specificity">
    <text evidence="5">Expressed in leaves at low levels (at protein levels) (PubMed:23837879). Present in seeds (PubMed:23837879).</text>
</comment>
<comment type="induction">
    <text evidence="4">Accumulates in response to drought, high light, paraquat and abscisic acid (ABA) treatments (at protein level).</text>
</comment>
<comment type="disruption phenotype">
    <text evidence="4 5">Increased sensitivity to photo-oxidative stress induced by drought, high light or paraquat, associated with a rapid accumulation of hydroxy fatty acids mediated by singlet oxygen (PubMed:19674405). When associated with disruption in TIL, highly sensitive to temperature, drought and light stresses than the single mutants, exhibiting intense lipid peroxidation. Seeds of this double mutant are very sensitive to natural and artificial aging, associated with the oxidation of polyunsaturated lipids (PubMed:23837879).</text>
</comment>
<comment type="similarity">
    <text evidence="7">Belongs to the calycin superfamily. Lipocalin family.</text>
</comment>
<dbReference type="EMBL" id="AL049746">
    <property type="protein sequence ID" value="CAB41869.1"/>
    <property type="molecule type" value="Genomic_DNA"/>
</dbReference>
<dbReference type="EMBL" id="CP002686">
    <property type="protein sequence ID" value="AEE78341.1"/>
    <property type="molecule type" value="Genomic_DNA"/>
</dbReference>
<dbReference type="EMBL" id="AY035165">
    <property type="protein sequence ID" value="AAK59669.1"/>
    <property type="molecule type" value="mRNA"/>
</dbReference>
<dbReference type="EMBL" id="AY044334">
    <property type="protein sequence ID" value="AAK73275.1"/>
    <property type="molecule type" value="mRNA"/>
</dbReference>
<dbReference type="EMBL" id="BT003002">
    <property type="protein sequence ID" value="AAO22810.1"/>
    <property type="molecule type" value="mRNA"/>
</dbReference>
<dbReference type="PIR" id="T07725">
    <property type="entry name" value="T07725"/>
</dbReference>
<dbReference type="RefSeq" id="NP_190370.1">
    <property type="nucleotide sequence ID" value="NM_114656.4"/>
</dbReference>
<dbReference type="SMR" id="Q9STS7"/>
<dbReference type="FunCoup" id="Q9STS7">
    <property type="interactions" value="866"/>
</dbReference>
<dbReference type="STRING" id="3702.Q9STS7"/>
<dbReference type="iPTMnet" id="Q9STS7"/>
<dbReference type="PaxDb" id="3702-AT3G47860.1"/>
<dbReference type="ProteomicsDB" id="245181"/>
<dbReference type="EnsemblPlants" id="AT3G47860.1">
    <property type="protein sequence ID" value="AT3G47860.1"/>
    <property type="gene ID" value="AT3G47860"/>
</dbReference>
<dbReference type="GeneID" id="823942"/>
<dbReference type="Gramene" id="AT3G47860.1">
    <property type="protein sequence ID" value="AT3G47860.1"/>
    <property type="gene ID" value="AT3G47860"/>
</dbReference>
<dbReference type="KEGG" id="ath:AT3G47860"/>
<dbReference type="Araport" id="AT3G47860"/>
<dbReference type="TAIR" id="AT3G47860">
    <property type="gene designation" value="CHL"/>
</dbReference>
<dbReference type="eggNOG" id="KOG4824">
    <property type="taxonomic scope" value="Eukaryota"/>
</dbReference>
<dbReference type="HOGENOM" id="CLU_072934_0_0_1"/>
<dbReference type="InParanoid" id="Q9STS7"/>
<dbReference type="OMA" id="MMRGMSA"/>
<dbReference type="OrthoDB" id="565904at2759"/>
<dbReference type="PhylomeDB" id="Q9STS7"/>
<dbReference type="PRO" id="PR:Q9STS7"/>
<dbReference type="Proteomes" id="UP000006548">
    <property type="component" value="Chromosome 3"/>
</dbReference>
<dbReference type="ExpressionAtlas" id="Q9STS7">
    <property type="expression patterns" value="baseline and differential"/>
</dbReference>
<dbReference type="GO" id="GO:0009507">
    <property type="term" value="C:chloroplast"/>
    <property type="evidence" value="ECO:0007005"/>
    <property type="project" value="TAIR"/>
</dbReference>
<dbReference type="GO" id="GO:0009543">
    <property type="term" value="C:chloroplast thylakoid lumen"/>
    <property type="evidence" value="ECO:0007669"/>
    <property type="project" value="UniProtKB-SubCell"/>
</dbReference>
<dbReference type="GO" id="GO:0009535">
    <property type="term" value="C:chloroplast thylakoid membrane"/>
    <property type="evidence" value="ECO:0007005"/>
    <property type="project" value="TAIR"/>
</dbReference>
<dbReference type="GO" id="GO:0005829">
    <property type="term" value="C:cytosol"/>
    <property type="evidence" value="ECO:0007005"/>
    <property type="project" value="TAIR"/>
</dbReference>
<dbReference type="GO" id="GO:0031977">
    <property type="term" value="C:thylakoid lumen"/>
    <property type="evidence" value="ECO:0000314"/>
    <property type="project" value="TAIR"/>
</dbReference>
<dbReference type="GO" id="GO:0045735">
    <property type="term" value="F:nutrient reservoir activity"/>
    <property type="evidence" value="ECO:0007669"/>
    <property type="project" value="UniProtKB-KW"/>
</dbReference>
<dbReference type="GO" id="GO:0036094">
    <property type="term" value="F:small molecule binding"/>
    <property type="evidence" value="ECO:0007669"/>
    <property type="project" value="InterPro"/>
</dbReference>
<dbReference type="GO" id="GO:0006629">
    <property type="term" value="P:lipid metabolic process"/>
    <property type="evidence" value="ECO:0007669"/>
    <property type="project" value="UniProtKB-KW"/>
</dbReference>
<dbReference type="GO" id="GO:0046322">
    <property type="term" value="P:negative regulation of fatty acid oxidation"/>
    <property type="evidence" value="ECO:0000315"/>
    <property type="project" value="UniProtKB"/>
</dbReference>
<dbReference type="GO" id="GO:0010117">
    <property type="term" value="P:photoprotection"/>
    <property type="evidence" value="ECO:0000314"/>
    <property type="project" value="TAIR"/>
</dbReference>
<dbReference type="GO" id="GO:0009737">
    <property type="term" value="P:response to abscisic acid"/>
    <property type="evidence" value="ECO:0000270"/>
    <property type="project" value="UniProtKB"/>
</dbReference>
<dbReference type="GO" id="GO:0009408">
    <property type="term" value="P:response to heat"/>
    <property type="evidence" value="ECO:0000315"/>
    <property type="project" value="UniProtKB"/>
</dbReference>
<dbReference type="GO" id="GO:0009644">
    <property type="term" value="P:response to high light intensity"/>
    <property type="evidence" value="ECO:0000315"/>
    <property type="project" value="UniProtKB"/>
</dbReference>
<dbReference type="GO" id="GO:0006979">
    <property type="term" value="P:response to oxidative stress"/>
    <property type="evidence" value="ECO:0000315"/>
    <property type="project" value="TAIR"/>
</dbReference>
<dbReference type="GO" id="GO:1901562">
    <property type="term" value="P:response to paraquat"/>
    <property type="evidence" value="ECO:0000270"/>
    <property type="project" value="UniProtKB"/>
</dbReference>
<dbReference type="GO" id="GO:0009414">
    <property type="term" value="P:response to water deprivation"/>
    <property type="evidence" value="ECO:0000270"/>
    <property type="project" value="UniProtKB"/>
</dbReference>
<dbReference type="GO" id="GO:0010431">
    <property type="term" value="P:seed maturation"/>
    <property type="evidence" value="ECO:0000315"/>
    <property type="project" value="UniProtKB"/>
</dbReference>
<dbReference type="Gene3D" id="2.40.128.20">
    <property type="match status" value="1"/>
</dbReference>
<dbReference type="InterPro" id="IPR012674">
    <property type="entry name" value="Calycin"/>
</dbReference>
<dbReference type="InterPro" id="IPR002345">
    <property type="entry name" value="Lipocalin"/>
</dbReference>
<dbReference type="InterPro" id="IPR022272">
    <property type="entry name" value="Lipocalin_CS"/>
</dbReference>
<dbReference type="InterPro" id="IPR000566">
    <property type="entry name" value="Lipocln_cytosolic_FA-bd_dom"/>
</dbReference>
<dbReference type="PANTHER" id="PTHR11430:SF32">
    <property type="entry name" value="CHLOROPLASTIC LIPOCALIN"/>
    <property type="match status" value="1"/>
</dbReference>
<dbReference type="PANTHER" id="PTHR11430">
    <property type="entry name" value="LIPOCALIN"/>
    <property type="match status" value="1"/>
</dbReference>
<dbReference type="Pfam" id="PF08212">
    <property type="entry name" value="Lipocalin_2"/>
    <property type="match status" value="1"/>
</dbReference>
<dbReference type="SUPFAM" id="SSF50814">
    <property type="entry name" value="Lipocalins"/>
    <property type="match status" value="1"/>
</dbReference>
<dbReference type="PROSITE" id="PS00213">
    <property type="entry name" value="LIPOCALIN"/>
    <property type="match status" value="1"/>
</dbReference>
<keyword id="KW-0150">Chloroplast</keyword>
<keyword id="KW-1015">Disulfide bond</keyword>
<keyword id="KW-0443">Lipid metabolism</keyword>
<keyword id="KW-0934">Plastid</keyword>
<keyword id="KW-1185">Reference proteome</keyword>
<keyword id="KW-0708">Seed storage protein</keyword>
<keyword id="KW-0758">Storage protein</keyword>
<keyword id="KW-0793">Thylakoid</keyword>
<keyword id="KW-0809">Transit peptide</keyword>
<accession>Q9STS7</accession>
<gene>
    <name evidence="6" type="primary">CHL</name>
    <name evidence="8" type="ordered locus">At3g47860</name>
    <name evidence="9" type="ORF">T23J7.190</name>
</gene>
<feature type="transit peptide" description="Chloroplast" evidence="2">
    <location>
        <begin position="1"/>
        <end position="39"/>
    </location>
</feature>
<feature type="chain" id="PRO_0000434133" description="Chloroplastic lipocalin" evidence="2">
    <location>
        <begin position="40"/>
        <end position="353"/>
    </location>
</feature>
<feature type="region of interest" description="Disordered" evidence="3">
    <location>
        <begin position="1"/>
        <end position="27"/>
    </location>
</feature>
<feature type="compositionally biased region" description="Low complexity" evidence="3">
    <location>
        <begin position="1"/>
        <end position="18"/>
    </location>
</feature>
<feature type="disulfide bond" evidence="1">
    <location>
        <begin position="163"/>
        <end position="299"/>
    </location>
</feature>